<sequence length="65" mass="7354">MPKLKTHRGLAKRIKISGSGKYLRKKAGKSHLLSGKSRKRKRNLKKTVIVDSTNVKAVKKLLPYL</sequence>
<name>RL35_CALS8</name>
<gene>
    <name evidence="1" type="primary">rpmI</name>
    <name type="ordered locus">Csac_1770</name>
</gene>
<organism>
    <name type="scientific">Caldicellulosiruptor saccharolyticus (strain ATCC 43494 / DSM 8903 / Tp8T 6331)</name>
    <dbReference type="NCBI Taxonomy" id="351627"/>
    <lineage>
        <taxon>Bacteria</taxon>
        <taxon>Bacillati</taxon>
        <taxon>Bacillota</taxon>
        <taxon>Bacillota incertae sedis</taxon>
        <taxon>Caldicellulosiruptorales</taxon>
        <taxon>Caldicellulosiruptoraceae</taxon>
        <taxon>Caldicellulosiruptor</taxon>
    </lineage>
</organism>
<dbReference type="EMBL" id="CP000679">
    <property type="protein sequence ID" value="ABP67355.1"/>
    <property type="molecule type" value="Genomic_DNA"/>
</dbReference>
<dbReference type="RefSeq" id="WP_011917289.1">
    <property type="nucleotide sequence ID" value="NC_009437.1"/>
</dbReference>
<dbReference type="SMR" id="A4XKC0"/>
<dbReference type="STRING" id="351627.Csac_1770"/>
<dbReference type="KEGG" id="csc:Csac_1770"/>
<dbReference type="eggNOG" id="COG0291">
    <property type="taxonomic scope" value="Bacteria"/>
</dbReference>
<dbReference type="HOGENOM" id="CLU_169643_4_3_9"/>
<dbReference type="OrthoDB" id="47476at2"/>
<dbReference type="Proteomes" id="UP000000256">
    <property type="component" value="Chromosome"/>
</dbReference>
<dbReference type="GO" id="GO:0015934">
    <property type="term" value="C:large ribosomal subunit"/>
    <property type="evidence" value="ECO:0007669"/>
    <property type="project" value="TreeGrafter"/>
</dbReference>
<dbReference type="GO" id="GO:0003735">
    <property type="term" value="F:structural constituent of ribosome"/>
    <property type="evidence" value="ECO:0007669"/>
    <property type="project" value="InterPro"/>
</dbReference>
<dbReference type="GO" id="GO:0006412">
    <property type="term" value="P:translation"/>
    <property type="evidence" value="ECO:0007669"/>
    <property type="project" value="UniProtKB-UniRule"/>
</dbReference>
<dbReference type="FunFam" id="4.10.410.60:FF:000001">
    <property type="entry name" value="50S ribosomal protein L35"/>
    <property type="match status" value="1"/>
</dbReference>
<dbReference type="Gene3D" id="4.10.410.60">
    <property type="match status" value="1"/>
</dbReference>
<dbReference type="HAMAP" id="MF_00514">
    <property type="entry name" value="Ribosomal_bL35"/>
    <property type="match status" value="1"/>
</dbReference>
<dbReference type="InterPro" id="IPR001706">
    <property type="entry name" value="Ribosomal_bL35"/>
</dbReference>
<dbReference type="InterPro" id="IPR021137">
    <property type="entry name" value="Ribosomal_bL35-like"/>
</dbReference>
<dbReference type="InterPro" id="IPR018265">
    <property type="entry name" value="Ribosomal_bL35_CS"/>
</dbReference>
<dbReference type="InterPro" id="IPR037229">
    <property type="entry name" value="Ribosomal_bL35_sf"/>
</dbReference>
<dbReference type="NCBIfam" id="TIGR00001">
    <property type="entry name" value="rpmI_bact"/>
    <property type="match status" value="1"/>
</dbReference>
<dbReference type="PANTHER" id="PTHR33343">
    <property type="entry name" value="54S RIBOSOMAL PROTEIN BL35M"/>
    <property type="match status" value="1"/>
</dbReference>
<dbReference type="PANTHER" id="PTHR33343:SF1">
    <property type="entry name" value="LARGE RIBOSOMAL SUBUNIT PROTEIN BL35M"/>
    <property type="match status" value="1"/>
</dbReference>
<dbReference type="Pfam" id="PF01632">
    <property type="entry name" value="Ribosomal_L35p"/>
    <property type="match status" value="1"/>
</dbReference>
<dbReference type="PRINTS" id="PR00064">
    <property type="entry name" value="RIBOSOMALL35"/>
</dbReference>
<dbReference type="SUPFAM" id="SSF143034">
    <property type="entry name" value="L35p-like"/>
    <property type="match status" value="1"/>
</dbReference>
<dbReference type="PROSITE" id="PS00936">
    <property type="entry name" value="RIBOSOMAL_L35"/>
    <property type="match status" value="1"/>
</dbReference>
<proteinExistence type="inferred from homology"/>
<protein>
    <recommendedName>
        <fullName evidence="1">Large ribosomal subunit protein bL35</fullName>
    </recommendedName>
    <alternativeName>
        <fullName evidence="2">50S ribosomal protein L35</fullName>
    </alternativeName>
</protein>
<evidence type="ECO:0000255" key="1">
    <source>
        <dbReference type="HAMAP-Rule" id="MF_00514"/>
    </source>
</evidence>
<evidence type="ECO:0000305" key="2"/>
<reference key="1">
    <citation type="submission" date="2007-04" db="EMBL/GenBank/DDBJ databases">
        <title>Genome sequence of the thermophilic hydrogen-producing bacterium Caldicellulosiruptor saccharolyticus DSM 8903.</title>
        <authorList>
            <person name="Copeland A."/>
            <person name="Lucas S."/>
            <person name="Lapidus A."/>
            <person name="Barry K."/>
            <person name="Detter J.C."/>
            <person name="Glavina del Rio T."/>
            <person name="Hammon N."/>
            <person name="Israni S."/>
            <person name="Dalin E."/>
            <person name="Tice H."/>
            <person name="Pitluck S."/>
            <person name="Kiss H."/>
            <person name="Brettin T."/>
            <person name="Bruce D."/>
            <person name="Han C."/>
            <person name="Schmutz J."/>
            <person name="Larimer F."/>
            <person name="Land M."/>
            <person name="Hauser L."/>
            <person name="Kyrpides N."/>
            <person name="Lykidis A."/>
            <person name="van de Werken H.J.G."/>
            <person name="Verhaart M.R.A."/>
            <person name="VanFossen A.L."/>
            <person name="Lewis D.L."/>
            <person name="Nichols J.D."/>
            <person name="Goorissen H.P."/>
            <person name="van Niel E.W.J."/>
            <person name="Stams F.J.M."/>
            <person name="Willquist K.U."/>
            <person name="Ward D.E."/>
            <person name="van der Oost J."/>
            <person name="Kelly R.M."/>
            <person name="Kengen S.M.W."/>
            <person name="Richardson P."/>
        </authorList>
    </citation>
    <scope>NUCLEOTIDE SEQUENCE [LARGE SCALE GENOMIC DNA]</scope>
    <source>
        <strain>ATCC 43494 / DSM 8903 / Tp8T 6331</strain>
    </source>
</reference>
<keyword id="KW-0687">Ribonucleoprotein</keyword>
<keyword id="KW-0689">Ribosomal protein</keyword>
<accession>A4XKC0</accession>
<comment type="similarity">
    <text evidence="1">Belongs to the bacterial ribosomal protein bL35 family.</text>
</comment>
<feature type="chain" id="PRO_1000050671" description="Large ribosomal subunit protein bL35">
    <location>
        <begin position="1"/>
        <end position="65"/>
    </location>
</feature>